<gene>
    <name evidence="1" type="primary">cbiT</name>
    <name type="ordered locus">Saci_0396</name>
</gene>
<proteinExistence type="inferred from homology"/>
<dbReference type="EC" id="2.1.1.196" evidence="1"/>
<dbReference type="EMBL" id="CP000077">
    <property type="protein sequence ID" value="AAY79812.1"/>
    <property type="molecule type" value="Genomic_DNA"/>
</dbReference>
<dbReference type="RefSeq" id="WP_011277314.1">
    <property type="nucleotide sequence ID" value="NC_007181.1"/>
</dbReference>
<dbReference type="SMR" id="Q4JBL7"/>
<dbReference type="STRING" id="330779.Saci_0396"/>
<dbReference type="GeneID" id="14550925"/>
<dbReference type="GeneID" id="78440746"/>
<dbReference type="KEGG" id="sai:Saci_0396"/>
<dbReference type="PATRIC" id="fig|330779.12.peg.394"/>
<dbReference type="eggNOG" id="arCOG00977">
    <property type="taxonomic scope" value="Archaea"/>
</dbReference>
<dbReference type="HOGENOM" id="CLU_094143_0_0_2"/>
<dbReference type="UniPathway" id="UPA00148">
    <property type="reaction ID" value="UER00229"/>
</dbReference>
<dbReference type="Proteomes" id="UP000001018">
    <property type="component" value="Chromosome"/>
</dbReference>
<dbReference type="GO" id="GO:0043776">
    <property type="term" value="F:cobalt-precorrin-6B C5-methyltransferase activity"/>
    <property type="evidence" value="ECO:0007669"/>
    <property type="project" value="RHEA"/>
</dbReference>
<dbReference type="GO" id="GO:0008276">
    <property type="term" value="F:protein methyltransferase activity"/>
    <property type="evidence" value="ECO:0007669"/>
    <property type="project" value="InterPro"/>
</dbReference>
<dbReference type="GO" id="GO:0019251">
    <property type="term" value="P:anaerobic cobalamin biosynthetic process"/>
    <property type="evidence" value="ECO:0007669"/>
    <property type="project" value="UniProtKB-UniRule"/>
</dbReference>
<dbReference type="GO" id="GO:0032259">
    <property type="term" value="P:methylation"/>
    <property type="evidence" value="ECO:0007669"/>
    <property type="project" value="UniProtKB-KW"/>
</dbReference>
<dbReference type="CDD" id="cd02440">
    <property type="entry name" value="AdoMet_MTases"/>
    <property type="match status" value="1"/>
</dbReference>
<dbReference type="Gene3D" id="3.40.50.150">
    <property type="entry name" value="Vaccinia Virus protein VP39"/>
    <property type="match status" value="1"/>
</dbReference>
<dbReference type="HAMAP" id="MF_00786">
    <property type="entry name" value="CbiT"/>
    <property type="match status" value="1"/>
</dbReference>
<dbReference type="InterPro" id="IPR023475">
    <property type="entry name" value="CbiT"/>
</dbReference>
<dbReference type="InterPro" id="IPR014008">
    <property type="entry name" value="Cbl_synth_MTase_CbiT"/>
</dbReference>
<dbReference type="InterPro" id="IPR050714">
    <property type="entry name" value="Cobalamin_biosynth_MTase"/>
</dbReference>
<dbReference type="InterPro" id="IPR025714">
    <property type="entry name" value="Methyltranfer_dom"/>
</dbReference>
<dbReference type="InterPro" id="IPR029063">
    <property type="entry name" value="SAM-dependent_MTases_sf"/>
</dbReference>
<dbReference type="NCBIfam" id="TIGR02469">
    <property type="entry name" value="CbiT"/>
    <property type="match status" value="1"/>
</dbReference>
<dbReference type="NCBIfam" id="NF001556">
    <property type="entry name" value="PRK00377.1"/>
    <property type="match status" value="1"/>
</dbReference>
<dbReference type="PANTHER" id="PTHR43182">
    <property type="entry name" value="COBALT-PRECORRIN-6B C(15)-METHYLTRANSFERASE (DECARBOXYLATING)"/>
    <property type="match status" value="1"/>
</dbReference>
<dbReference type="PANTHER" id="PTHR43182:SF1">
    <property type="entry name" value="COBALT-PRECORRIN-7 C(5)-METHYLTRANSFERASE"/>
    <property type="match status" value="1"/>
</dbReference>
<dbReference type="Pfam" id="PF13847">
    <property type="entry name" value="Methyltransf_31"/>
    <property type="match status" value="1"/>
</dbReference>
<dbReference type="SUPFAM" id="SSF53335">
    <property type="entry name" value="S-adenosyl-L-methionine-dependent methyltransferases"/>
    <property type="match status" value="1"/>
</dbReference>
<sequence>MRVPGIPDEEFIREEKIPMTKEEIRVLALSKARLFYGAKFLDVGSGTGSVSVEAGLIVGEKGKVYAVERDPQAVELTRKNVEKFSLRNVEIIEGEAPEVLNKINDELDSAFIGGTERLEEIIPVVSEKIRRGGMIVLDAILIESAVKALHTLSELGYKAEVIEVIVAKGMKTSKGYAMISRNPIFIIYGEKK</sequence>
<protein>
    <recommendedName>
        <fullName evidence="1">Probable cobalt-precorrin-6B C(15)-methyltransferase (decarboxylating)</fullName>
        <ecNumber evidence="1">2.1.1.196</ecNumber>
    </recommendedName>
</protein>
<reference key="1">
    <citation type="journal article" date="2005" name="J. Bacteriol.">
        <title>The genome of Sulfolobus acidocaldarius, a model organism of the Crenarchaeota.</title>
        <authorList>
            <person name="Chen L."/>
            <person name="Bruegger K."/>
            <person name="Skovgaard M."/>
            <person name="Redder P."/>
            <person name="She Q."/>
            <person name="Torarinsson E."/>
            <person name="Greve B."/>
            <person name="Awayez M."/>
            <person name="Zibat A."/>
            <person name="Klenk H.-P."/>
            <person name="Garrett R.A."/>
        </authorList>
    </citation>
    <scope>NUCLEOTIDE SEQUENCE [LARGE SCALE GENOMIC DNA]</scope>
    <source>
        <strain>ATCC 33909 / DSM 639 / JCM 8929 / NBRC 15157 / NCIMB 11770</strain>
    </source>
</reference>
<keyword id="KW-0169">Cobalamin biosynthesis</keyword>
<keyword id="KW-0489">Methyltransferase</keyword>
<keyword id="KW-1185">Reference proteome</keyword>
<keyword id="KW-0949">S-adenosyl-L-methionine</keyword>
<keyword id="KW-0808">Transferase</keyword>
<organism>
    <name type="scientific">Sulfolobus acidocaldarius (strain ATCC 33909 / DSM 639 / JCM 8929 / NBRC 15157 / NCIMB 11770)</name>
    <dbReference type="NCBI Taxonomy" id="330779"/>
    <lineage>
        <taxon>Archaea</taxon>
        <taxon>Thermoproteota</taxon>
        <taxon>Thermoprotei</taxon>
        <taxon>Sulfolobales</taxon>
        <taxon>Sulfolobaceae</taxon>
        <taxon>Sulfolobus</taxon>
    </lineage>
</organism>
<comment type="function">
    <text evidence="1">Catalyzes the methylation of C-15 in cobalt-precorrin-6B followed by the decarboxylation of C-12 to form cobalt-precorrin-7.</text>
</comment>
<comment type="catalytic activity">
    <reaction evidence="1">
        <text>Co-precorrin-6B + S-adenosyl-L-methionine = Co-precorrin-7 + S-adenosyl-L-homocysteine + CO2</text>
        <dbReference type="Rhea" id="RHEA:36067"/>
        <dbReference type="ChEBI" id="CHEBI:16526"/>
        <dbReference type="ChEBI" id="CHEBI:57856"/>
        <dbReference type="ChEBI" id="CHEBI:59789"/>
        <dbReference type="ChEBI" id="CHEBI:70791"/>
        <dbReference type="ChEBI" id="CHEBI:72780"/>
        <dbReference type="EC" id="2.1.1.196"/>
    </reaction>
</comment>
<comment type="pathway">
    <text evidence="1">Cofactor biosynthesis; adenosylcobalamin biosynthesis; cob(II)yrinate a,c-diamide from sirohydrochlorin (anaerobic route): step 8/10.</text>
</comment>
<comment type="similarity">
    <text evidence="1">Belongs to the methyltransferase superfamily. Archaeal-type CbiT family.</text>
</comment>
<name>CBIT_SULAC</name>
<accession>Q4JBL7</accession>
<evidence type="ECO:0000255" key="1">
    <source>
        <dbReference type="HAMAP-Rule" id="MF_00786"/>
    </source>
</evidence>
<feature type="chain" id="PRO_0000134943" description="Probable cobalt-precorrin-6B C(15)-methyltransferase (decarboxylating)">
    <location>
        <begin position="1"/>
        <end position="192"/>
    </location>
</feature>
<feature type="binding site" evidence="1">
    <location>
        <position position="20"/>
    </location>
    <ligand>
        <name>S-adenosyl-L-methionine</name>
        <dbReference type="ChEBI" id="CHEBI:59789"/>
    </ligand>
</feature>
<feature type="binding site" evidence="1">
    <location>
        <begin position="44"/>
        <end position="48"/>
    </location>
    <ligand>
        <name>S-adenosyl-L-methionine</name>
        <dbReference type="ChEBI" id="CHEBI:59789"/>
    </ligand>
</feature>
<feature type="binding site" evidence="1">
    <location>
        <position position="68"/>
    </location>
    <ligand>
        <name>S-adenosyl-L-methionine</name>
        <dbReference type="ChEBI" id="CHEBI:59789"/>
    </ligand>
</feature>
<feature type="binding site" evidence="1">
    <location>
        <position position="96"/>
    </location>
    <ligand>
        <name>S-adenosyl-L-methionine</name>
        <dbReference type="ChEBI" id="CHEBI:59789"/>
    </ligand>
</feature>